<feature type="signal peptide" evidence="2">
    <location>
        <begin position="1"/>
        <end position="29"/>
    </location>
</feature>
<feature type="chain" id="PRO_0000253999" description="PLASMODESMATA CALLOSE-BINDING PROTEIN 5">
    <location>
        <begin position="30"/>
        <end position="157"/>
    </location>
</feature>
<feature type="propeptide" id="PRO_0000254000" description="Removed in mature form" evidence="2">
    <location>
        <begin position="158"/>
        <end position="180"/>
    </location>
</feature>
<feature type="region of interest" description="Disordered" evidence="3">
    <location>
        <begin position="126"/>
        <end position="151"/>
    </location>
</feature>
<feature type="lipid moiety-binding region" description="GPI-anchor amidated serine" evidence="2">
    <location>
        <position position="157"/>
    </location>
</feature>
<feature type="disulfide bond" evidence="1">
    <location>
        <begin position="42"/>
        <end position="105"/>
    </location>
</feature>
<feature type="sequence conflict" description="In Ref. 3; AAM67357." evidence="5" ref="3">
    <location>
        <position position="138"/>
    </location>
</feature>
<name>PDCB5_ARATH</name>
<sequence length="180" mass="19171">MIMSLPQCSHLRLSILAATAAMLMVITTAQIGGQVIQVELWCVAKNNAEDSSLQTAIEWACGQGGADCGPIQQGGPCNDPTDVQKMASFVFNNYYLKNGEEDEACNFNNNAALTSLNPSQGTCKYPSSKGANNGRLADDTSMGAGQADMSRGGRPISSSWMVTFIGFGSLLTMTWIIHHL</sequence>
<dbReference type="EMBL" id="AL137081">
    <property type="protein sequence ID" value="CAB68148.1"/>
    <property type="status" value="ALT_SEQ"/>
    <property type="molecule type" value="Genomic_DNA"/>
</dbReference>
<dbReference type="EMBL" id="CP002686">
    <property type="protein sequence ID" value="AEE79741.1"/>
    <property type="molecule type" value="Genomic_DNA"/>
</dbReference>
<dbReference type="EMBL" id="AY085999">
    <property type="protein sequence ID" value="AAM67357.1"/>
    <property type="status" value="ALT_INIT"/>
    <property type="molecule type" value="mRNA"/>
</dbReference>
<dbReference type="EMBL" id="BT025769">
    <property type="protein sequence ID" value="ABF83659.1"/>
    <property type="molecule type" value="mRNA"/>
</dbReference>
<dbReference type="PIR" id="T45970">
    <property type="entry name" value="T45970"/>
</dbReference>
<dbReference type="RefSeq" id="NP_001327504.1">
    <property type="nucleotide sequence ID" value="NM_001339907.1"/>
</dbReference>
<dbReference type="RefSeq" id="NP_567060.1">
    <property type="nucleotide sequence ID" value="NM_115672.3"/>
</dbReference>
<dbReference type="SMR" id="Q9M2K6"/>
<dbReference type="FunCoup" id="Q9M2K6">
    <property type="interactions" value="302"/>
</dbReference>
<dbReference type="STRING" id="3702.Q9M2K6"/>
<dbReference type="CAZy" id="CBM43">
    <property type="family name" value="Carbohydrate-Binding Module Family 43"/>
</dbReference>
<dbReference type="TCDB" id="1.I.2.1.1">
    <property type="family name" value="the plant plasmodesmata (ppd) family"/>
</dbReference>
<dbReference type="PaxDb" id="3702-AT3G58100.1"/>
<dbReference type="ProteomicsDB" id="236366"/>
<dbReference type="EnsemblPlants" id="AT3G58100.1">
    <property type="protein sequence ID" value="AT3G58100.1"/>
    <property type="gene ID" value="AT3G58100"/>
</dbReference>
<dbReference type="GeneID" id="824979"/>
<dbReference type="Gramene" id="AT3G58100.1">
    <property type="protein sequence ID" value="AT3G58100.1"/>
    <property type="gene ID" value="AT3G58100"/>
</dbReference>
<dbReference type="KEGG" id="ath:AT3G58100"/>
<dbReference type="Araport" id="AT3G58100"/>
<dbReference type="TAIR" id="AT3G58100">
    <property type="gene designation" value="PDCB5"/>
</dbReference>
<dbReference type="eggNOG" id="ENOG502S2JG">
    <property type="taxonomic scope" value="Eukaryota"/>
</dbReference>
<dbReference type="HOGENOM" id="CLU_128427_0_0_1"/>
<dbReference type="InParanoid" id="Q9M2K6"/>
<dbReference type="OMA" id="TMTRIIH"/>
<dbReference type="OrthoDB" id="1919050at2759"/>
<dbReference type="PhylomeDB" id="Q9M2K6"/>
<dbReference type="PRO" id="PR:Q9M2K6"/>
<dbReference type="Proteomes" id="UP000006548">
    <property type="component" value="Chromosome 3"/>
</dbReference>
<dbReference type="ExpressionAtlas" id="Q9M2K6">
    <property type="expression patterns" value="baseline and differential"/>
</dbReference>
<dbReference type="GO" id="GO:0005886">
    <property type="term" value="C:plasma membrane"/>
    <property type="evidence" value="ECO:0007669"/>
    <property type="project" value="UniProtKB-SubCell"/>
</dbReference>
<dbReference type="GO" id="GO:0009506">
    <property type="term" value="C:plasmodesma"/>
    <property type="evidence" value="ECO:0000314"/>
    <property type="project" value="TAIR"/>
</dbReference>
<dbReference type="GO" id="GO:0098552">
    <property type="term" value="C:side of membrane"/>
    <property type="evidence" value="ECO:0007669"/>
    <property type="project" value="UniProtKB-KW"/>
</dbReference>
<dbReference type="GO" id="GO:0001872">
    <property type="term" value="F:(1-&gt;3)-beta-D-glucan binding"/>
    <property type="evidence" value="ECO:0000250"/>
    <property type="project" value="TAIR"/>
</dbReference>
<dbReference type="GO" id="GO:0030247">
    <property type="term" value="F:polysaccharide binding"/>
    <property type="evidence" value="ECO:0000250"/>
    <property type="project" value="TAIR"/>
</dbReference>
<dbReference type="FunFam" id="1.20.58.1040:FF:000001">
    <property type="entry name" value="Glucan endo-1,3-beta-glucosidase 4"/>
    <property type="match status" value="1"/>
</dbReference>
<dbReference type="Gene3D" id="1.20.58.1040">
    <property type="match status" value="1"/>
</dbReference>
<dbReference type="InterPro" id="IPR012946">
    <property type="entry name" value="X8"/>
</dbReference>
<dbReference type="InterPro" id="IPR044788">
    <property type="entry name" value="X8_dom_prot"/>
</dbReference>
<dbReference type="PANTHER" id="PTHR31044">
    <property type="entry name" value="BETA-1,3 GLUCANASE"/>
    <property type="match status" value="1"/>
</dbReference>
<dbReference type="PANTHER" id="PTHR31044:SF33">
    <property type="entry name" value="PLASMODESMATA CALLOSE-BINDING PROTEIN 5"/>
    <property type="match status" value="1"/>
</dbReference>
<dbReference type="Pfam" id="PF07983">
    <property type="entry name" value="X8"/>
    <property type="match status" value="1"/>
</dbReference>
<dbReference type="SMART" id="SM00768">
    <property type="entry name" value="X8"/>
    <property type="match status" value="1"/>
</dbReference>
<comment type="subcellular location">
    <subcellularLocation>
        <location evidence="4">Cell membrane</location>
        <topology evidence="4">Lipid-anchor</topology>
        <topology evidence="4">GPI-anchor</topology>
    </subcellularLocation>
    <subcellularLocation>
        <location evidence="4">Cell junction</location>
        <location evidence="4">Plasmodesma</location>
    </subcellularLocation>
</comment>
<comment type="PTM">
    <text evidence="1">Contains two additional disulfide bonds.</text>
</comment>
<comment type="sequence caution" evidence="5">
    <conflict type="erroneous initiation">
        <sequence resource="EMBL-CDS" id="AAM67357"/>
    </conflict>
</comment>
<comment type="sequence caution" evidence="5">
    <conflict type="erroneous gene model prediction">
        <sequence resource="EMBL-CDS" id="CAB68148"/>
    </conflict>
</comment>
<protein>
    <recommendedName>
        <fullName>PLASMODESMATA CALLOSE-BINDING PROTEIN 5</fullName>
        <shortName>AtPDCB5</shortName>
    </recommendedName>
    <alternativeName>
        <fullName>Glucan endo-1,3-beta-glucosidase-like protein 1</fullName>
    </alternativeName>
</protein>
<keyword id="KW-0965">Cell junction</keyword>
<keyword id="KW-1003">Cell membrane</keyword>
<keyword id="KW-1015">Disulfide bond</keyword>
<keyword id="KW-0325">Glycoprotein</keyword>
<keyword id="KW-0336">GPI-anchor</keyword>
<keyword id="KW-0449">Lipoprotein</keyword>
<keyword id="KW-0472">Membrane</keyword>
<keyword id="KW-1185">Reference proteome</keyword>
<keyword id="KW-0732">Signal</keyword>
<reference key="1">
    <citation type="journal article" date="2000" name="Nature">
        <title>Sequence and analysis of chromosome 3 of the plant Arabidopsis thaliana.</title>
        <authorList>
            <person name="Salanoubat M."/>
            <person name="Lemcke K."/>
            <person name="Rieger M."/>
            <person name="Ansorge W."/>
            <person name="Unseld M."/>
            <person name="Fartmann B."/>
            <person name="Valle G."/>
            <person name="Bloecker H."/>
            <person name="Perez-Alonso M."/>
            <person name="Obermaier B."/>
            <person name="Delseny M."/>
            <person name="Boutry M."/>
            <person name="Grivell L.A."/>
            <person name="Mache R."/>
            <person name="Puigdomenech P."/>
            <person name="De Simone V."/>
            <person name="Choisne N."/>
            <person name="Artiguenave F."/>
            <person name="Robert C."/>
            <person name="Brottier P."/>
            <person name="Wincker P."/>
            <person name="Cattolico L."/>
            <person name="Weissenbach J."/>
            <person name="Saurin W."/>
            <person name="Quetier F."/>
            <person name="Schaefer M."/>
            <person name="Mueller-Auer S."/>
            <person name="Gabel C."/>
            <person name="Fuchs M."/>
            <person name="Benes V."/>
            <person name="Wurmbach E."/>
            <person name="Drzonek H."/>
            <person name="Erfle H."/>
            <person name="Jordan N."/>
            <person name="Bangert S."/>
            <person name="Wiedelmann R."/>
            <person name="Kranz H."/>
            <person name="Voss H."/>
            <person name="Holland R."/>
            <person name="Brandt P."/>
            <person name="Nyakatura G."/>
            <person name="Vezzi A."/>
            <person name="D'Angelo M."/>
            <person name="Pallavicini A."/>
            <person name="Toppo S."/>
            <person name="Simionati B."/>
            <person name="Conrad A."/>
            <person name="Hornischer K."/>
            <person name="Kauer G."/>
            <person name="Loehnert T.-H."/>
            <person name="Nordsiek G."/>
            <person name="Reichelt J."/>
            <person name="Scharfe M."/>
            <person name="Schoen O."/>
            <person name="Bargues M."/>
            <person name="Terol J."/>
            <person name="Climent J."/>
            <person name="Navarro P."/>
            <person name="Collado C."/>
            <person name="Perez-Perez A."/>
            <person name="Ottenwaelder B."/>
            <person name="Duchemin D."/>
            <person name="Cooke R."/>
            <person name="Laudie M."/>
            <person name="Berger-Llauro C."/>
            <person name="Purnelle B."/>
            <person name="Masuy D."/>
            <person name="de Haan M."/>
            <person name="Maarse A.C."/>
            <person name="Alcaraz J.-P."/>
            <person name="Cottet A."/>
            <person name="Casacuberta E."/>
            <person name="Monfort A."/>
            <person name="Argiriou A."/>
            <person name="Flores M."/>
            <person name="Liguori R."/>
            <person name="Vitale D."/>
            <person name="Mannhaupt G."/>
            <person name="Haase D."/>
            <person name="Schoof H."/>
            <person name="Rudd S."/>
            <person name="Zaccaria P."/>
            <person name="Mewes H.-W."/>
            <person name="Mayer K.F.X."/>
            <person name="Kaul S."/>
            <person name="Town C.D."/>
            <person name="Koo H.L."/>
            <person name="Tallon L.J."/>
            <person name="Jenkins J."/>
            <person name="Rooney T."/>
            <person name="Rizzo M."/>
            <person name="Walts A."/>
            <person name="Utterback T."/>
            <person name="Fujii C.Y."/>
            <person name="Shea T.P."/>
            <person name="Creasy T.H."/>
            <person name="Haas B."/>
            <person name="Maiti R."/>
            <person name="Wu D."/>
            <person name="Peterson J."/>
            <person name="Van Aken S."/>
            <person name="Pai G."/>
            <person name="Militscher J."/>
            <person name="Sellers P."/>
            <person name="Gill J.E."/>
            <person name="Feldblyum T.V."/>
            <person name="Preuss D."/>
            <person name="Lin X."/>
            <person name="Nierman W.C."/>
            <person name="Salzberg S.L."/>
            <person name="White O."/>
            <person name="Venter J.C."/>
            <person name="Fraser C.M."/>
            <person name="Kaneko T."/>
            <person name="Nakamura Y."/>
            <person name="Sato S."/>
            <person name="Kato T."/>
            <person name="Asamizu E."/>
            <person name="Sasamoto S."/>
            <person name="Kimura T."/>
            <person name="Idesawa K."/>
            <person name="Kawashima K."/>
            <person name="Kishida Y."/>
            <person name="Kiyokawa C."/>
            <person name="Kohara M."/>
            <person name="Matsumoto M."/>
            <person name="Matsuno A."/>
            <person name="Muraki A."/>
            <person name="Nakayama S."/>
            <person name="Nakazaki N."/>
            <person name="Shinpo S."/>
            <person name="Takeuchi C."/>
            <person name="Wada T."/>
            <person name="Watanabe A."/>
            <person name="Yamada M."/>
            <person name="Yasuda M."/>
            <person name="Tabata S."/>
        </authorList>
    </citation>
    <scope>NUCLEOTIDE SEQUENCE [LARGE SCALE GENOMIC DNA]</scope>
    <source>
        <strain>cv. Columbia</strain>
    </source>
</reference>
<reference key="2">
    <citation type="journal article" date="2017" name="Plant J.">
        <title>Araport11: a complete reannotation of the Arabidopsis thaliana reference genome.</title>
        <authorList>
            <person name="Cheng C.Y."/>
            <person name="Krishnakumar V."/>
            <person name="Chan A.P."/>
            <person name="Thibaud-Nissen F."/>
            <person name="Schobel S."/>
            <person name="Town C.D."/>
        </authorList>
    </citation>
    <scope>GENOME REANNOTATION</scope>
    <source>
        <strain>cv. Columbia</strain>
    </source>
</reference>
<reference key="3">
    <citation type="submission" date="2002-03" db="EMBL/GenBank/DDBJ databases">
        <title>Full-length cDNA from Arabidopsis thaliana.</title>
        <authorList>
            <person name="Brover V.V."/>
            <person name="Troukhan M.E."/>
            <person name="Alexandrov N.A."/>
            <person name="Lu Y.-P."/>
            <person name="Flavell R.B."/>
            <person name="Feldmann K.A."/>
        </authorList>
    </citation>
    <scope>NUCLEOTIDE SEQUENCE [LARGE SCALE MRNA]</scope>
</reference>
<reference key="4">
    <citation type="submission" date="2006-06" db="EMBL/GenBank/DDBJ databases">
        <title>Arabidopsis ORF clones.</title>
        <authorList>
            <person name="Kim C.J."/>
            <person name="Chen H."/>
            <person name="Quinitio C."/>
            <person name="Shinn P."/>
            <person name="Ecker J.R."/>
        </authorList>
    </citation>
    <scope>NUCLEOTIDE SEQUENCE [LARGE SCALE MRNA]</scope>
    <source>
        <strain>cv. Columbia</strain>
    </source>
</reference>
<reference key="5">
    <citation type="journal article" date="2009" name="Plant Cell">
        <title>An Arabidopsis GPI-anchor plasmodesmal neck protein with callose binding activity and potential to regulate cell-to-cell trafficking.</title>
        <authorList>
            <person name="Simpson C."/>
            <person name="Thomas C."/>
            <person name="Findlay K."/>
            <person name="Bayer E."/>
            <person name="Maule A.J."/>
        </authorList>
    </citation>
    <scope>GENE FAMILY</scope>
    <scope>NOMENCLATURE</scope>
    <scope>SUBCELLULAR LOCATION</scope>
</reference>
<organism>
    <name type="scientific">Arabidopsis thaliana</name>
    <name type="common">Mouse-ear cress</name>
    <dbReference type="NCBI Taxonomy" id="3702"/>
    <lineage>
        <taxon>Eukaryota</taxon>
        <taxon>Viridiplantae</taxon>
        <taxon>Streptophyta</taxon>
        <taxon>Embryophyta</taxon>
        <taxon>Tracheophyta</taxon>
        <taxon>Spermatophyta</taxon>
        <taxon>Magnoliopsida</taxon>
        <taxon>eudicotyledons</taxon>
        <taxon>Gunneridae</taxon>
        <taxon>Pentapetalae</taxon>
        <taxon>rosids</taxon>
        <taxon>malvids</taxon>
        <taxon>Brassicales</taxon>
        <taxon>Brassicaceae</taxon>
        <taxon>Camelineae</taxon>
        <taxon>Arabidopsis</taxon>
    </lineage>
</organism>
<accession>Q9M2K6</accession>
<accession>Q1ECG5</accession>
<accession>Q8LDH7</accession>
<evidence type="ECO:0000250" key="1"/>
<evidence type="ECO:0000255" key="2"/>
<evidence type="ECO:0000256" key="3">
    <source>
        <dbReference type="SAM" id="MobiDB-lite"/>
    </source>
</evidence>
<evidence type="ECO:0000269" key="4">
    <source>
    </source>
</evidence>
<evidence type="ECO:0000305" key="5"/>
<gene>
    <name type="primary">PDCB5</name>
    <name type="ordered locus">At3g58100</name>
    <name type="ORF">F9D24.10</name>
</gene>
<proteinExistence type="evidence at transcript level"/>